<comment type="function">
    <text evidence="4 5">Part of the bacABCDEFG operon responsible for the biosynthesis of bacilysin, an irreversible inactivator of the glutaminase domain of glucosamine synthetase. Catalyzes the dehydrogenation of the C7-hydroxyl group in the 4S-tetrahydrotyrosine (4S-H4Tyr) to yield anticapsin (epoxycyclohexanonyl-Ala). It is not able to oxidize the 4R-H4Tyr diastereomer and the dihydrobacilysin dipeptide (L-Ala-4S-H4Tyr dipeptide).</text>
</comment>
<comment type="catalytic activity">
    <reaction evidence="5">
        <text>L-dihydroanticapsin + NAD(+) = L-anticapsin + NADH + H(+)</text>
        <dbReference type="Rhea" id="RHEA:44628"/>
        <dbReference type="ChEBI" id="CHEBI:15378"/>
        <dbReference type="ChEBI" id="CHEBI:57540"/>
        <dbReference type="ChEBI" id="CHEBI:57945"/>
        <dbReference type="ChEBI" id="CHEBI:84310"/>
        <dbReference type="ChEBI" id="CHEBI:84358"/>
        <dbReference type="EC" id="1.1.1.385"/>
    </reaction>
</comment>
<comment type="pathway">
    <text evidence="9">Antibiotic biosynthesis; bacilysin biosynthesis.</text>
</comment>
<comment type="induction">
    <text evidence="3">The compound guanosine 5'-diphosphate 3'-diphosphate (ppGpp) is essential for the transcription of the bacABCDE operon and GTP regulates the transcription of both this operon and ywfH via the CodY-mediated regulation system.</text>
</comment>
<comment type="disruption phenotype">
    <text evidence="5">Cells lacking this gene show an accumulation of dihydroanticapsin and dihydrobacilysin.</text>
</comment>
<comment type="similarity">
    <text evidence="8">Belongs to the short-chain dehydrogenases/reductases (SDR) family.</text>
</comment>
<comment type="sequence caution" evidence="8">
    <conflict type="erroneous initiation">
        <sequence resource="EMBL-CDS" id="CAA51638"/>
    </conflict>
    <text>Extended N-terminus.</text>
</comment>
<organism>
    <name type="scientific">Bacillus subtilis (strain 168)</name>
    <dbReference type="NCBI Taxonomy" id="224308"/>
    <lineage>
        <taxon>Bacteria</taxon>
        <taxon>Bacillati</taxon>
        <taxon>Bacillota</taxon>
        <taxon>Bacilli</taxon>
        <taxon>Bacillales</taxon>
        <taxon>Bacillaceae</taxon>
        <taxon>Bacillus</taxon>
    </lineage>
</organism>
<keyword id="KW-0002">3D-structure</keyword>
<keyword id="KW-0045">Antibiotic biosynthesis</keyword>
<keyword id="KW-0520">NAD</keyword>
<keyword id="KW-0560">Oxidoreductase</keyword>
<keyword id="KW-1185">Reference proteome</keyword>
<accession>P39640</accession>
<dbReference type="EC" id="1.1.1.385" evidence="5"/>
<dbReference type="EMBL" id="X73124">
    <property type="protein sequence ID" value="CAA51638.1"/>
    <property type="status" value="ALT_INIT"/>
    <property type="molecule type" value="Genomic_DNA"/>
</dbReference>
<dbReference type="EMBL" id="AL009126">
    <property type="protein sequence ID" value="CAB15799.2"/>
    <property type="molecule type" value="Genomic_DNA"/>
</dbReference>
<dbReference type="PIR" id="S39737">
    <property type="entry name" value="S39737"/>
</dbReference>
<dbReference type="RefSeq" id="NP_391652.2">
    <property type="nucleotide sequence ID" value="NC_000964.3"/>
</dbReference>
<dbReference type="RefSeq" id="WP_003243359.1">
    <property type="nucleotide sequence ID" value="NZ_OZ025638.1"/>
</dbReference>
<dbReference type="PDB" id="5ITV">
    <property type="method" value="X-ray"/>
    <property type="resolution" value="2.26 A"/>
    <property type="chains" value="A/B/C/D=1-253"/>
</dbReference>
<dbReference type="PDB" id="5ITW">
    <property type="method" value="X-ray"/>
    <property type="resolution" value="1.19 A"/>
    <property type="chains" value="A/B/C/D=1-253"/>
</dbReference>
<dbReference type="PDBsum" id="5ITV"/>
<dbReference type="PDBsum" id="5ITW"/>
<dbReference type="SMR" id="P39640"/>
<dbReference type="FunCoup" id="P39640">
    <property type="interactions" value="201"/>
</dbReference>
<dbReference type="STRING" id="224308.BSU37720"/>
<dbReference type="PaxDb" id="224308-BSU37720"/>
<dbReference type="EnsemblBacteria" id="CAB15799">
    <property type="protein sequence ID" value="CAB15799"/>
    <property type="gene ID" value="BSU_37720"/>
</dbReference>
<dbReference type="GeneID" id="937065"/>
<dbReference type="KEGG" id="bsu:BSU37720"/>
<dbReference type="PATRIC" id="fig|224308.179.peg.4084"/>
<dbReference type="eggNOG" id="COG1028">
    <property type="taxonomic scope" value="Bacteria"/>
</dbReference>
<dbReference type="InParanoid" id="P39640"/>
<dbReference type="OrthoDB" id="9803333at2"/>
<dbReference type="BioCyc" id="BSUB:BSU37720-MONOMER"/>
<dbReference type="BioCyc" id="MetaCyc:MONOMER-19127"/>
<dbReference type="BRENDA" id="1.1.1.385">
    <property type="organism ID" value="658"/>
</dbReference>
<dbReference type="UniPathway" id="UPA00100"/>
<dbReference type="Proteomes" id="UP000001570">
    <property type="component" value="Chromosome"/>
</dbReference>
<dbReference type="GO" id="GO:0016491">
    <property type="term" value="F:oxidoreductase activity"/>
    <property type="evidence" value="ECO:0000318"/>
    <property type="project" value="GO_Central"/>
</dbReference>
<dbReference type="GO" id="GO:0017000">
    <property type="term" value="P:antibiotic biosynthetic process"/>
    <property type="evidence" value="ECO:0007669"/>
    <property type="project" value="UniProtKB-KW"/>
</dbReference>
<dbReference type="CDD" id="cd05233">
    <property type="entry name" value="SDR_c"/>
    <property type="match status" value="1"/>
</dbReference>
<dbReference type="FunFam" id="3.40.50.720:FF:000084">
    <property type="entry name" value="Short-chain dehydrogenase reductase"/>
    <property type="match status" value="1"/>
</dbReference>
<dbReference type="Gene3D" id="3.40.50.720">
    <property type="entry name" value="NAD(P)-binding Rossmann-like Domain"/>
    <property type="match status" value="1"/>
</dbReference>
<dbReference type="InterPro" id="IPR036291">
    <property type="entry name" value="NAD(P)-bd_dom_sf"/>
</dbReference>
<dbReference type="InterPro" id="IPR020904">
    <property type="entry name" value="Sc_DH/Rdtase_CS"/>
</dbReference>
<dbReference type="InterPro" id="IPR002347">
    <property type="entry name" value="SDR_fam"/>
</dbReference>
<dbReference type="NCBIfam" id="NF033173">
    <property type="entry name" value="anticapsin_BacC"/>
    <property type="match status" value="1"/>
</dbReference>
<dbReference type="NCBIfam" id="NF005559">
    <property type="entry name" value="PRK07231.1"/>
    <property type="match status" value="1"/>
</dbReference>
<dbReference type="PANTHER" id="PTHR24321">
    <property type="entry name" value="DEHYDROGENASES, SHORT CHAIN"/>
    <property type="match status" value="1"/>
</dbReference>
<dbReference type="PANTHER" id="PTHR24321:SF8">
    <property type="entry name" value="ESTRADIOL 17-BETA-DEHYDROGENASE 8-RELATED"/>
    <property type="match status" value="1"/>
</dbReference>
<dbReference type="Pfam" id="PF13561">
    <property type="entry name" value="adh_short_C2"/>
    <property type="match status" value="1"/>
</dbReference>
<dbReference type="PRINTS" id="PR00081">
    <property type="entry name" value="GDHRDH"/>
</dbReference>
<dbReference type="PRINTS" id="PR00080">
    <property type="entry name" value="SDRFAMILY"/>
</dbReference>
<dbReference type="SUPFAM" id="SSF51735">
    <property type="entry name" value="NAD(P)-binding Rossmann-fold domains"/>
    <property type="match status" value="1"/>
</dbReference>
<dbReference type="PROSITE" id="PS00061">
    <property type="entry name" value="ADH_SHORT"/>
    <property type="match status" value="1"/>
</dbReference>
<sequence>MNLTDKTVLITGGASGIGYAAVQAFLGQQANVVVADIDEAQGEAMVRKENNDRLHFVQTDITDEAACQHAVESAVHTFGGLDVLINNAGIEIVAPIHEMELSDWNKVLQVNLTGMFLMSKHALKHMLAAGKGNIINTCSVGGLVAWPDIPAYNASKGGVLQLTKSMAVDYAKHQIRVNCVCPGIIDTPLNEKSFLENNEGTLEEIKKEKAKVNPLLRLGKPEEIANVMLFLASDLSSYMTGSAITADGGYTAQ</sequence>
<evidence type="ECO:0000250" key="1">
    <source>
        <dbReference type="UniProtKB" id="P16544"/>
    </source>
</evidence>
<evidence type="ECO:0000255" key="2">
    <source>
        <dbReference type="PROSITE-ProRule" id="PRU10001"/>
    </source>
</evidence>
<evidence type="ECO:0000269" key="3">
    <source>
    </source>
</evidence>
<evidence type="ECO:0000269" key="4">
    <source>
    </source>
</evidence>
<evidence type="ECO:0000269" key="5">
    <source>
    </source>
</evidence>
<evidence type="ECO:0000303" key="6">
    <source>
    </source>
</evidence>
<evidence type="ECO:0000303" key="7">
    <source>
    </source>
</evidence>
<evidence type="ECO:0000305" key="8"/>
<evidence type="ECO:0000305" key="9">
    <source>
    </source>
</evidence>
<evidence type="ECO:0007829" key="10">
    <source>
        <dbReference type="PDB" id="5ITW"/>
    </source>
</evidence>
<reference key="1">
    <citation type="journal article" date="1993" name="Mol. Microbiol.">
        <title>Bacillus subtilis genome project: cloning and sequencing of the 97 kb region from 325 degrees to 333 degrees.</title>
        <authorList>
            <person name="Glaser P."/>
            <person name="Kunst F."/>
            <person name="Arnaud M."/>
            <person name="Coudart M.P."/>
            <person name="Gonzales W."/>
            <person name="Hullo M.-F."/>
            <person name="Ionescu M."/>
            <person name="Lubochinsky B."/>
            <person name="Marcelino L."/>
            <person name="Moszer I."/>
            <person name="Presecan E."/>
            <person name="Santana M."/>
            <person name="Schneider E."/>
            <person name="Schweizer J."/>
            <person name="Vertes A."/>
            <person name="Rapoport G."/>
            <person name="Danchin A."/>
        </authorList>
    </citation>
    <scope>NUCLEOTIDE SEQUENCE [GENOMIC DNA]</scope>
    <source>
        <strain>168</strain>
    </source>
</reference>
<reference key="2">
    <citation type="journal article" date="1997" name="Nature">
        <title>The complete genome sequence of the Gram-positive bacterium Bacillus subtilis.</title>
        <authorList>
            <person name="Kunst F."/>
            <person name="Ogasawara N."/>
            <person name="Moszer I."/>
            <person name="Albertini A.M."/>
            <person name="Alloni G."/>
            <person name="Azevedo V."/>
            <person name="Bertero M.G."/>
            <person name="Bessieres P."/>
            <person name="Bolotin A."/>
            <person name="Borchert S."/>
            <person name="Borriss R."/>
            <person name="Boursier L."/>
            <person name="Brans A."/>
            <person name="Braun M."/>
            <person name="Brignell S.C."/>
            <person name="Bron S."/>
            <person name="Brouillet S."/>
            <person name="Bruschi C.V."/>
            <person name="Caldwell B."/>
            <person name="Capuano V."/>
            <person name="Carter N.M."/>
            <person name="Choi S.-K."/>
            <person name="Codani J.-J."/>
            <person name="Connerton I.F."/>
            <person name="Cummings N.J."/>
            <person name="Daniel R.A."/>
            <person name="Denizot F."/>
            <person name="Devine K.M."/>
            <person name="Duesterhoeft A."/>
            <person name="Ehrlich S.D."/>
            <person name="Emmerson P.T."/>
            <person name="Entian K.-D."/>
            <person name="Errington J."/>
            <person name="Fabret C."/>
            <person name="Ferrari E."/>
            <person name="Foulger D."/>
            <person name="Fritz C."/>
            <person name="Fujita M."/>
            <person name="Fujita Y."/>
            <person name="Fuma S."/>
            <person name="Galizzi A."/>
            <person name="Galleron N."/>
            <person name="Ghim S.-Y."/>
            <person name="Glaser P."/>
            <person name="Goffeau A."/>
            <person name="Golightly E.J."/>
            <person name="Grandi G."/>
            <person name="Guiseppi G."/>
            <person name="Guy B.J."/>
            <person name="Haga K."/>
            <person name="Haiech J."/>
            <person name="Harwood C.R."/>
            <person name="Henaut A."/>
            <person name="Hilbert H."/>
            <person name="Holsappel S."/>
            <person name="Hosono S."/>
            <person name="Hullo M.-F."/>
            <person name="Itaya M."/>
            <person name="Jones L.-M."/>
            <person name="Joris B."/>
            <person name="Karamata D."/>
            <person name="Kasahara Y."/>
            <person name="Klaerr-Blanchard M."/>
            <person name="Klein C."/>
            <person name="Kobayashi Y."/>
            <person name="Koetter P."/>
            <person name="Koningstein G."/>
            <person name="Krogh S."/>
            <person name="Kumano M."/>
            <person name="Kurita K."/>
            <person name="Lapidus A."/>
            <person name="Lardinois S."/>
            <person name="Lauber J."/>
            <person name="Lazarevic V."/>
            <person name="Lee S.-M."/>
            <person name="Levine A."/>
            <person name="Liu H."/>
            <person name="Masuda S."/>
            <person name="Mauel C."/>
            <person name="Medigue C."/>
            <person name="Medina N."/>
            <person name="Mellado R.P."/>
            <person name="Mizuno M."/>
            <person name="Moestl D."/>
            <person name="Nakai S."/>
            <person name="Noback M."/>
            <person name="Noone D."/>
            <person name="O'Reilly M."/>
            <person name="Ogawa K."/>
            <person name="Ogiwara A."/>
            <person name="Oudega B."/>
            <person name="Park S.-H."/>
            <person name="Parro V."/>
            <person name="Pohl T.M."/>
            <person name="Portetelle D."/>
            <person name="Porwollik S."/>
            <person name="Prescott A.M."/>
            <person name="Presecan E."/>
            <person name="Pujic P."/>
            <person name="Purnelle B."/>
            <person name="Rapoport G."/>
            <person name="Rey M."/>
            <person name="Reynolds S."/>
            <person name="Rieger M."/>
            <person name="Rivolta C."/>
            <person name="Rocha E."/>
            <person name="Roche B."/>
            <person name="Rose M."/>
            <person name="Sadaie Y."/>
            <person name="Sato T."/>
            <person name="Scanlan E."/>
            <person name="Schleich S."/>
            <person name="Schroeter R."/>
            <person name="Scoffone F."/>
            <person name="Sekiguchi J."/>
            <person name="Sekowska A."/>
            <person name="Seror S.J."/>
            <person name="Serror P."/>
            <person name="Shin B.-S."/>
            <person name="Soldo B."/>
            <person name="Sorokin A."/>
            <person name="Tacconi E."/>
            <person name="Takagi T."/>
            <person name="Takahashi H."/>
            <person name="Takemaru K."/>
            <person name="Takeuchi M."/>
            <person name="Tamakoshi A."/>
            <person name="Tanaka T."/>
            <person name="Terpstra P."/>
            <person name="Tognoni A."/>
            <person name="Tosato V."/>
            <person name="Uchiyama S."/>
            <person name="Vandenbol M."/>
            <person name="Vannier F."/>
            <person name="Vassarotti A."/>
            <person name="Viari A."/>
            <person name="Wambutt R."/>
            <person name="Wedler E."/>
            <person name="Wedler H."/>
            <person name="Weitzenegger T."/>
            <person name="Winters P."/>
            <person name="Wipat A."/>
            <person name="Yamamoto H."/>
            <person name="Yamane K."/>
            <person name="Yasumoto K."/>
            <person name="Yata K."/>
            <person name="Yoshida K."/>
            <person name="Yoshikawa H.-F."/>
            <person name="Zumstein E."/>
            <person name="Yoshikawa H."/>
            <person name="Danchin A."/>
        </authorList>
    </citation>
    <scope>NUCLEOTIDE SEQUENCE [LARGE SCALE GENOMIC DNA]</scope>
    <source>
        <strain>168</strain>
    </source>
</reference>
<reference key="3">
    <citation type="journal article" date="2003" name="J. Biol. Chem.">
        <title>Guanine nucleotides guanosine 5'-diphosphate 3'-diphosphate and GTP co-operatively regulate the production of an antibiotic bacilysin in Bacillus subtilis.</title>
        <authorList>
            <person name="Inaoka T."/>
            <person name="Takahashi K."/>
            <person name="Ohnishi-Kameyama M."/>
            <person name="Yoshida M."/>
            <person name="Ochi K."/>
        </authorList>
    </citation>
    <scope>INDUCTION</scope>
    <source>
        <strain>168 / 61884</strain>
    </source>
</reference>
<reference key="4">
    <citation type="journal article" date="2005" name="Arch. Microbiol.">
        <title>bac genes for recombinant bacilysin and anticapsin production in Bacillus host strains.</title>
        <authorList>
            <person name="Steinborn G."/>
            <person name="Hajirezaei M.-R."/>
            <person name="Hofemeister J."/>
        </authorList>
    </citation>
    <scope>FUNCTION IN BACILYSIN PRODUCTION</scope>
    <scope>GENE NAME</scope>
</reference>
<reference key="5">
    <citation type="journal article" date="2013" name="Biochemistry">
        <title>Action and timing of BacC and BacD in the late stages of biosynthesis of the dipeptide antibiotic bacilysin.</title>
        <authorList>
            <person name="Parker J.B."/>
            <person name="Walsh C.T."/>
        </authorList>
    </citation>
    <scope>FUNCTION</scope>
    <scope>CATALYTIC ACTIVITY</scope>
    <scope>DISRUPTION PHENOTYPE</scope>
    <scope>PATHWAY</scope>
    <scope>SUBSTRATE SPECIFICITY</scope>
    <source>
        <strain>168</strain>
    </source>
</reference>
<name>BACC_BACSU</name>
<proteinExistence type="evidence at protein level"/>
<feature type="chain" id="PRO_0000054522" description="Dihydroanticapsin 7-dehydrogenase">
    <location>
        <begin position="1"/>
        <end position="253"/>
    </location>
</feature>
<feature type="active site" description="Proton acceptor" evidence="2">
    <location>
        <position position="152"/>
    </location>
</feature>
<feature type="binding site" evidence="1">
    <location>
        <begin position="9"/>
        <end position="31"/>
    </location>
    <ligand>
        <name>NAD(+)</name>
        <dbReference type="ChEBI" id="CHEBI:57540"/>
    </ligand>
</feature>
<feature type="binding site" evidence="1">
    <location>
        <position position="139"/>
    </location>
    <ligand>
        <name>substrate</name>
    </ligand>
</feature>
<feature type="strand" evidence="10">
    <location>
        <begin position="7"/>
        <end position="11"/>
    </location>
</feature>
<feature type="turn" evidence="10">
    <location>
        <begin position="12"/>
        <end position="14"/>
    </location>
</feature>
<feature type="helix" evidence="10">
    <location>
        <begin position="16"/>
        <end position="27"/>
    </location>
</feature>
<feature type="strand" evidence="10">
    <location>
        <begin position="31"/>
        <end position="37"/>
    </location>
</feature>
<feature type="helix" evidence="10">
    <location>
        <begin position="39"/>
        <end position="49"/>
    </location>
</feature>
<feature type="strand" evidence="10">
    <location>
        <begin position="54"/>
        <end position="58"/>
    </location>
</feature>
<feature type="helix" evidence="10">
    <location>
        <begin position="64"/>
        <end position="78"/>
    </location>
</feature>
<feature type="strand" evidence="10">
    <location>
        <begin position="83"/>
        <end position="86"/>
    </location>
</feature>
<feature type="helix" evidence="10">
    <location>
        <begin position="96"/>
        <end position="98"/>
    </location>
</feature>
<feature type="helix" evidence="10">
    <location>
        <begin position="101"/>
        <end position="111"/>
    </location>
</feature>
<feature type="helix" evidence="10">
    <location>
        <begin position="113"/>
        <end position="129"/>
    </location>
</feature>
<feature type="strand" evidence="10">
    <location>
        <begin position="132"/>
        <end position="137"/>
    </location>
</feature>
<feature type="helix" evidence="10">
    <location>
        <begin position="140"/>
        <end position="142"/>
    </location>
</feature>
<feature type="helix" evidence="10">
    <location>
        <begin position="150"/>
        <end position="170"/>
    </location>
</feature>
<feature type="helix" evidence="10">
    <location>
        <begin position="171"/>
        <end position="173"/>
    </location>
</feature>
<feature type="strand" evidence="10">
    <location>
        <begin position="175"/>
        <end position="182"/>
    </location>
</feature>
<feature type="helix" evidence="10">
    <location>
        <begin position="188"/>
        <end position="197"/>
    </location>
</feature>
<feature type="strand" evidence="10">
    <location>
        <begin position="198"/>
        <end position="200"/>
    </location>
</feature>
<feature type="helix" evidence="10">
    <location>
        <begin position="202"/>
        <end position="210"/>
    </location>
</feature>
<feature type="helix" evidence="10">
    <location>
        <begin position="221"/>
        <end position="232"/>
    </location>
</feature>
<feature type="helix" evidence="10">
    <location>
        <begin position="234"/>
        <end position="236"/>
    </location>
</feature>
<feature type="strand" evidence="10">
    <location>
        <begin position="243"/>
        <end position="247"/>
    </location>
</feature>
<feature type="helix" evidence="10">
    <location>
        <begin position="250"/>
        <end position="252"/>
    </location>
</feature>
<gene>
    <name evidence="6" type="primary">bacC</name>
    <name type="synonym">ywfD</name>
    <name type="ordered locus">BSU37720</name>
    <name type="ORF">ipa-82d</name>
</gene>
<protein>
    <recommendedName>
        <fullName evidence="7">Dihydroanticapsin 7-dehydrogenase</fullName>
        <ecNumber evidence="5">1.1.1.385</ecNumber>
    </recommendedName>
    <alternativeName>
        <fullName evidence="6">Bacilysin biosynthesis oxidoreductase BacC</fullName>
    </alternativeName>
</protein>